<dbReference type="EC" id="3.2.1.196" evidence="1"/>
<dbReference type="EMBL" id="CP000038">
    <property type="protein sequence ID" value="AAZ90218.1"/>
    <property type="molecule type" value="Genomic_DNA"/>
</dbReference>
<dbReference type="RefSeq" id="WP_000197379.1">
    <property type="nucleotide sequence ID" value="NC_007384.1"/>
</dbReference>
<dbReference type="SMR" id="Q3YW94"/>
<dbReference type="CAZy" id="CBM48">
    <property type="family name" value="Carbohydrate-Binding Module Family 48"/>
</dbReference>
<dbReference type="CAZy" id="GH13">
    <property type="family name" value="Glycoside Hydrolase Family 13"/>
</dbReference>
<dbReference type="GeneID" id="93778558"/>
<dbReference type="KEGG" id="ssn:SSON_3671"/>
<dbReference type="HOGENOM" id="CLU_011725_1_1_6"/>
<dbReference type="UniPathway" id="UPA00165"/>
<dbReference type="Proteomes" id="UP000002529">
    <property type="component" value="Chromosome"/>
</dbReference>
<dbReference type="GO" id="GO:0004133">
    <property type="term" value="F:glycogen debranching enzyme activity"/>
    <property type="evidence" value="ECO:0007669"/>
    <property type="project" value="UniProtKB-UniRule"/>
</dbReference>
<dbReference type="GO" id="GO:0004553">
    <property type="term" value="F:hydrolase activity, hydrolyzing O-glycosyl compounds"/>
    <property type="evidence" value="ECO:0007669"/>
    <property type="project" value="InterPro"/>
</dbReference>
<dbReference type="GO" id="GO:0005980">
    <property type="term" value="P:glycogen catabolic process"/>
    <property type="evidence" value="ECO:0007669"/>
    <property type="project" value="UniProtKB-UniRule"/>
</dbReference>
<dbReference type="CDD" id="cd11326">
    <property type="entry name" value="AmyAc_Glg_debranch"/>
    <property type="match status" value="1"/>
</dbReference>
<dbReference type="CDD" id="cd02856">
    <property type="entry name" value="E_set_GDE_Isoamylase_N"/>
    <property type="match status" value="1"/>
</dbReference>
<dbReference type="FunFam" id="2.60.40.10:FF:000468">
    <property type="entry name" value="Glycogen debranching enzyme"/>
    <property type="match status" value="1"/>
</dbReference>
<dbReference type="FunFam" id="3.20.20.80:FF:000031">
    <property type="entry name" value="Glycogen debranching enzyme"/>
    <property type="match status" value="1"/>
</dbReference>
<dbReference type="Gene3D" id="3.20.20.80">
    <property type="entry name" value="Glycosidases"/>
    <property type="match status" value="1"/>
</dbReference>
<dbReference type="Gene3D" id="2.60.40.1180">
    <property type="entry name" value="Golgi alpha-mannosidase II"/>
    <property type="match status" value="1"/>
</dbReference>
<dbReference type="Gene3D" id="2.60.40.10">
    <property type="entry name" value="Immunoglobulins"/>
    <property type="match status" value="1"/>
</dbReference>
<dbReference type="HAMAP" id="MF_01248">
    <property type="entry name" value="GlgX"/>
    <property type="match status" value="1"/>
</dbReference>
<dbReference type="InterPro" id="IPR040784">
    <property type="entry name" value="GlgX_C"/>
</dbReference>
<dbReference type="InterPro" id="IPR044505">
    <property type="entry name" value="GlgX_Isoamylase_N_E_set"/>
</dbReference>
<dbReference type="InterPro" id="IPR006047">
    <property type="entry name" value="Glyco_hydro_13_cat_dom"/>
</dbReference>
<dbReference type="InterPro" id="IPR004193">
    <property type="entry name" value="Glyco_hydro_13_N"/>
</dbReference>
<dbReference type="InterPro" id="IPR013780">
    <property type="entry name" value="Glyco_hydro_b"/>
</dbReference>
<dbReference type="InterPro" id="IPR022844">
    <property type="entry name" value="Glycogen_debranch_bac"/>
</dbReference>
<dbReference type="InterPro" id="IPR011837">
    <property type="entry name" value="Glycogen_debranch_GlgX"/>
</dbReference>
<dbReference type="InterPro" id="IPR017853">
    <property type="entry name" value="Glycoside_hydrolase_SF"/>
</dbReference>
<dbReference type="InterPro" id="IPR013783">
    <property type="entry name" value="Ig-like_fold"/>
</dbReference>
<dbReference type="InterPro" id="IPR014756">
    <property type="entry name" value="Ig_E-set"/>
</dbReference>
<dbReference type="NCBIfam" id="TIGR02100">
    <property type="entry name" value="glgX_debranch"/>
    <property type="match status" value="1"/>
</dbReference>
<dbReference type="NCBIfam" id="NF002983">
    <property type="entry name" value="PRK03705.1"/>
    <property type="match status" value="1"/>
</dbReference>
<dbReference type="PANTHER" id="PTHR43002">
    <property type="entry name" value="GLYCOGEN DEBRANCHING ENZYME"/>
    <property type="match status" value="1"/>
</dbReference>
<dbReference type="Pfam" id="PF00128">
    <property type="entry name" value="Alpha-amylase"/>
    <property type="match status" value="1"/>
</dbReference>
<dbReference type="Pfam" id="PF02922">
    <property type="entry name" value="CBM_48"/>
    <property type="match status" value="1"/>
</dbReference>
<dbReference type="Pfam" id="PF18390">
    <property type="entry name" value="GlgX_C"/>
    <property type="match status" value="1"/>
</dbReference>
<dbReference type="SMART" id="SM00642">
    <property type="entry name" value="Aamy"/>
    <property type="match status" value="1"/>
</dbReference>
<dbReference type="SUPFAM" id="SSF51445">
    <property type="entry name" value="(Trans)glycosidases"/>
    <property type="match status" value="1"/>
</dbReference>
<dbReference type="SUPFAM" id="SSF81296">
    <property type="entry name" value="E set domains"/>
    <property type="match status" value="1"/>
</dbReference>
<accession>Q3YW94</accession>
<feature type="chain" id="PRO_1000067108" description="Glycogen debranching enzyme">
    <location>
        <begin position="1"/>
        <end position="657"/>
    </location>
</feature>
<feature type="region of interest" description="Disordered" evidence="2">
    <location>
        <begin position="458"/>
        <end position="479"/>
    </location>
</feature>
<feature type="compositionally biased region" description="Basic and acidic residues" evidence="2">
    <location>
        <begin position="458"/>
        <end position="467"/>
    </location>
</feature>
<feature type="active site" description="Nucleophile" evidence="1">
    <location>
        <position position="336"/>
    </location>
</feature>
<feature type="active site" description="Proton donor" evidence="1">
    <location>
        <position position="371"/>
    </location>
</feature>
<feature type="site" description="Transition state stabilizer" evidence="1">
    <location>
        <position position="443"/>
    </location>
</feature>
<proteinExistence type="inferred from homology"/>
<sequence>MTRLAIGKPAPLGAHYDGQGVNFTLFSAHAERVELCVFDANGQEHRYDLPGHSGDIWHGYLPDARPGLRYGYRVHGPWQPAEGHRFNPAKLLIDPCARQIEGEFKDNPLLHAGHNEPDYRDNAAIAPKCVVVVDHYDWEDDAPPRTPWGSTIIYEAHVKGLTYLHPEIPVEIRGTYKALGHPVMINYLKQLGITALELLPVAQFASEPRLQRMGLSNYWGYNPVAMFALHPAYACSPETALHEFRDAIKALHKAGIEVILDIVLNHSAELDLDGPLFSLRGIDNRSYYWIREDGDYHNWTGCGNTLNLSHPAVVDYACACLRYWVETCHVDGFRFDLAAVMGRTPEFRQDAPLFTAIQNCPVLSQVKLIAEPWDIALGGYQVGNFPPLFAEWNDHFRDAARRFWLHYDLPLGAFAGRFAASSDVFKRNGRLPSAAINLVTAHDGFTLRDCVCFNHKHNEANGEENRDGTNNNYSNNHGKEGLGGSLDLVERRRDSIHALLTTLLLSQGTPMLLAGDEHGHSQHGNNNAYCQDNQLTWLDWSQASSGLTAFTAALIHLRKRIPALVENRWWEEGDGNVRWLNRYAQPLSTDEWQNGPKQLQILLSDRFLIAINATLEVTEIVLPAGEWHAIPPFAGEDNPVITAVWQGPAHGLCVFQR</sequence>
<organism>
    <name type="scientific">Shigella sonnei (strain Ss046)</name>
    <dbReference type="NCBI Taxonomy" id="300269"/>
    <lineage>
        <taxon>Bacteria</taxon>
        <taxon>Pseudomonadati</taxon>
        <taxon>Pseudomonadota</taxon>
        <taxon>Gammaproteobacteria</taxon>
        <taxon>Enterobacterales</taxon>
        <taxon>Enterobacteriaceae</taxon>
        <taxon>Shigella</taxon>
    </lineage>
</organism>
<reference key="1">
    <citation type="journal article" date="2005" name="Nucleic Acids Res.">
        <title>Genome dynamics and diversity of Shigella species, the etiologic agents of bacillary dysentery.</title>
        <authorList>
            <person name="Yang F."/>
            <person name="Yang J."/>
            <person name="Zhang X."/>
            <person name="Chen L."/>
            <person name="Jiang Y."/>
            <person name="Yan Y."/>
            <person name="Tang X."/>
            <person name="Wang J."/>
            <person name="Xiong Z."/>
            <person name="Dong J."/>
            <person name="Xue Y."/>
            <person name="Zhu Y."/>
            <person name="Xu X."/>
            <person name="Sun L."/>
            <person name="Chen S."/>
            <person name="Nie H."/>
            <person name="Peng J."/>
            <person name="Xu J."/>
            <person name="Wang Y."/>
            <person name="Yuan Z."/>
            <person name="Wen Y."/>
            <person name="Yao Z."/>
            <person name="Shen Y."/>
            <person name="Qiang B."/>
            <person name="Hou Y."/>
            <person name="Yu J."/>
            <person name="Jin Q."/>
        </authorList>
    </citation>
    <scope>NUCLEOTIDE SEQUENCE [LARGE SCALE GENOMIC DNA]</scope>
    <source>
        <strain>Ss046</strain>
    </source>
</reference>
<gene>
    <name evidence="1" type="primary">glgX</name>
    <name type="ordered locus">SSON_3671</name>
</gene>
<name>GLGX_SHISS</name>
<keyword id="KW-0119">Carbohydrate metabolism</keyword>
<keyword id="KW-0321">Glycogen metabolism</keyword>
<keyword id="KW-0326">Glycosidase</keyword>
<keyword id="KW-0378">Hydrolase</keyword>
<keyword id="KW-1185">Reference proteome</keyword>
<comment type="function">
    <text evidence="1">Removes maltotriose and maltotetraose chains that are attached by 1,6-alpha-linkage to the limit dextrin main chain, generating a debranched limit dextrin.</text>
</comment>
<comment type="catalytic activity">
    <reaction evidence="1">
        <text>Hydrolysis of (1-&gt;6)-alpha-D-glucosidic linkages to branches with degrees of polymerization of three or four glucose residues in limit dextrin.</text>
        <dbReference type="EC" id="3.2.1.196"/>
    </reaction>
</comment>
<comment type="pathway">
    <text evidence="1">Glycan degradation; glycogen degradation.</text>
</comment>
<comment type="similarity">
    <text evidence="1">Belongs to the glycosyl hydrolase 13 family.</text>
</comment>
<evidence type="ECO:0000255" key="1">
    <source>
        <dbReference type="HAMAP-Rule" id="MF_01248"/>
    </source>
</evidence>
<evidence type="ECO:0000256" key="2">
    <source>
        <dbReference type="SAM" id="MobiDB-lite"/>
    </source>
</evidence>
<protein>
    <recommendedName>
        <fullName evidence="1">Glycogen debranching enzyme</fullName>
        <ecNumber evidence="1">3.2.1.196</ecNumber>
    </recommendedName>
    <alternativeName>
        <fullName evidence="1">Limit dextrin alpha-1,6-maltotetraose-hydrolase</fullName>
    </alternativeName>
</protein>